<keyword id="KW-0002">3D-structure</keyword>
<keyword id="KW-0963">Cytoplasm</keyword>
<keyword id="KW-0539">Nucleus</keyword>
<keyword id="KW-0597">Phosphoprotein</keyword>
<keyword id="KW-1185">Reference proteome</keyword>
<keyword id="KW-0687">Ribonucleoprotein</keyword>
<keyword id="KW-0689">Ribosomal protein</keyword>
<keyword id="KW-0690">Ribosome biogenesis</keyword>
<keyword id="KW-0698">rRNA processing</keyword>
<reference key="1">
    <citation type="journal article" date="2002" name="Nature">
        <title>The genome sequence of Schizosaccharomyces pombe.</title>
        <authorList>
            <person name="Wood V."/>
            <person name="Gwilliam R."/>
            <person name="Rajandream M.A."/>
            <person name="Lyne M.H."/>
            <person name="Lyne R."/>
            <person name="Stewart A."/>
            <person name="Sgouros J.G."/>
            <person name="Peat N."/>
            <person name="Hayles J."/>
            <person name="Baker S.G."/>
            <person name="Basham D."/>
            <person name="Bowman S."/>
            <person name="Brooks K."/>
            <person name="Brown D."/>
            <person name="Brown S."/>
            <person name="Chillingworth T."/>
            <person name="Churcher C.M."/>
            <person name="Collins M."/>
            <person name="Connor R."/>
            <person name="Cronin A."/>
            <person name="Davis P."/>
            <person name="Feltwell T."/>
            <person name="Fraser A."/>
            <person name="Gentles S."/>
            <person name="Goble A."/>
            <person name="Hamlin N."/>
            <person name="Harris D.E."/>
            <person name="Hidalgo J."/>
            <person name="Hodgson G."/>
            <person name="Holroyd S."/>
            <person name="Hornsby T."/>
            <person name="Howarth S."/>
            <person name="Huckle E.J."/>
            <person name="Hunt S."/>
            <person name="Jagels K."/>
            <person name="James K.D."/>
            <person name="Jones L."/>
            <person name="Jones M."/>
            <person name="Leather S."/>
            <person name="McDonald S."/>
            <person name="McLean J."/>
            <person name="Mooney P."/>
            <person name="Moule S."/>
            <person name="Mungall K.L."/>
            <person name="Murphy L.D."/>
            <person name="Niblett D."/>
            <person name="Odell C."/>
            <person name="Oliver K."/>
            <person name="O'Neil S."/>
            <person name="Pearson D."/>
            <person name="Quail M.A."/>
            <person name="Rabbinowitsch E."/>
            <person name="Rutherford K.M."/>
            <person name="Rutter S."/>
            <person name="Saunders D."/>
            <person name="Seeger K."/>
            <person name="Sharp S."/>
            <person name="Skelton J."/>
            <person name="Simmonds M.N."/>
            <person name="Squares R."/>
            <person name="Squares S."/>
            <person name="Stevens K."/>
            <person name="Taylor K."/>
            <person name="Taylor R.G."/>
            <person name="Tivey A."/>
            <person name="Walsh S.V."/>
            <person name="Warren T."/>
            <person name="Whitehead S."/>
            <person name="Woodward J.R."/>
            <person name="Volckaert G."/>
            <person name="Aert R."/>
            <person name="Robben J."/>
            <person name="Grymonprez B."/>
            <person name="Weltjens I."/>
            <person name="Vanstreels E."/>
            <person name="Rieger M."/>
            <person name="Schaefer M."/>
            <person name="Mueller-Auer S."/>
            <person name="Gabel C."/>
            <person name="Fuchs M."/>
            <person name="Duesterhoeft A."/>
            <person name="Fritzc C."/>
            <person name="Holzer E."/>
            <person name="Moestl D."/>
            <person name="Hilbert H."/>
            <person name="Borzym K."/>
            <person name="Langer I."/>
            <person name="Beck A."/>
            <person name="Lehrach H."/>
            <person name="Reinhardt R."/>
            <person name="Pohl T.M."/>
            <person name="Eger P."/>
            <person name="Zimmermann W."/>
            <person name="Wedler H."/>
            <person name="Wambutt R."/>
            <person name="Purnelle B."/>
            <person name="Goffeau A."/>
            <person name="Cadieu E."/>
            <person name="Dreano S."/>
            <person name="Gloux S."/>
            <person name="Lelaure V."/>
            <person name="Mottier S."/>
            <person name="Galibert F."/>
            <person name="Aves S.J."/>
            <person name="Xiang Z."/>
            <person name="Hunt C."/>
            <person name="Moore K."/>
            <person name="Hurst S.M."/>
            <person name="Lucas M."/>
            <person name="Rochet M."/>
            <person name="Gaillardin C."/>
            <person name="Tallada V.A."/>
            <person name="Garzon A."/>
            <person name="Thode G."/>
            <person name="Daga R.R."/>
            <person name="Cruzado L."/>
            <person name="Jimenez J."/>
            <person name="Sanchez M."/>
            <person name="del Rey F."/>
            <person name="Benito J."/>
            <person name="Dominguez A."/>
            <person name="Revuelta J.L."/>
            <person name="Moreno S."/>
            <person name="Armstrong J."/>
            <person name="Forsburg S.L."/>
            <person name="Cerutti L."/>
            <person name="Lowe T."/>
            <person name="McCombie W.R."/>
            <person name="Paulsen I."/>
            <person name="Potashkin J."/>
            <person name="Shpakovski G.V."/>
            <person name="Ussery D."/>
            <person name="Barrell B.G."/>
            <person name="Nurse P."/>
        </authorList>
    </citation>
    <scope>NUCLEOTIDE SEQUENCE [LARGE SCALE GENOMIC DNA]</scope>
    <source>
        <strain>972 / ATCC 24843</strain>
    </source>
</reference>
<reference key="2">
    <citation type="journal article" date="2003" name="Biochem. Biophys. Res. Commun.">
        <title>Ribosomal proteins S0 and S21 are involved in the stability of 18S rRNA in fission yeast, Schizosaccharomyces pombe.</title>
        <authorList>
            <person name="Sato M."/>
            <person name="Kong C.J."/>
            <person name="Yoshida H."/>
            <person name="Nakamura T."/>
            <person name="Wada A."/>
            <person name="Shimoda C."/>
            <person name="Kaneda Y."/>
        </authorList>
    </citation>
    <scope>FUNCTION</scope>
    <scope>INTERACTION WITH RPS21</scope>
    <scope>DISRUPTION PHENOTYPE</scope>
</reference>
<reference key="3">
    <citation type="journal article" date="2006" name="Nat. Biotechnol.">
        <title>ORFeome cloning and global analysis of protein localization in the fission yeast Schizosaccharomyces pombe.</title>
        <authorList>
            <person name="Matsuyama A."/>
            <person name="Arai R."/>
            <person name="Yashiroda Y."/>
            <person name="Shirai A."/>
            <person name="Kamata A."/>
            <person name="Sekido S."/>
            <person name="Kobayashi Y."/>
            <person name="Hashimoto A."/>
            <person name="Hamamoto M."/>
            <person name="Hiraoka Y."/>
            <person name="Horinouchi S."/>
            <person name="Yoshida M."/>
        </authorList>
    </citation>
    <scope>SUBCELLULAR LOCATION [LARGE SCALE ANALYSIS]</scope>
</reference>
<reference key="4">
    <citation type="journal article" date="2008" name="J. Proteome Res.">
        <title>Phosphoproteome analysis of fission yeast.</title>
        <authorList>
            <person name="Wilson-Grady J.T."/>
            <person name="Villen J."/>
            <person name="Gygi S.P."/>
        </authorList>
    </citation>
    <scope>PHOSPHORYLATION [LARGE SCALE ANALYSIS] AT SER-45</scope>
    <scope>IDENTIFICATION BY MASS SPECTROMETRY</scope>
</reference>
<organism>
    <name type="scientific">Schizosaccharomyces pombe (strain 972 / ATCC 24843)</name>
    <name type="common">Fission yeast</name>
    <dbReference type="NCBI Taxonomy" id="284812"/>
    <lineage>
        <taxon>Eukaryota</taxon>
        <taxon>Fungi</taxon>
        <taxon>Dikarya</taxon>
        <taxon>Ascomycota</taxon>
        <taxon>Taphrinomycotina</taxon>
        <taxon>Schizosaccharomycetes</taxon>
        <taxon>Schizosaccharomycetales</taxon>
        <taxon>Schizosaccharomycetaceae</taxon>
        <taxon>Schizosaccharomyces</taxon>
    </lineage>
</organism>
<name>RSSA1_SCHPO</name>
<accession>Q9Y7L8</accession>
<comment type="function">
    <text evidence="1 4">Component of the ribosome, a large ribonucleoprotein complex responsible for the synthesis of proteins in the cell. The small ribosomal subunit (SSU) binds messenger RNAs (mRNAs) and translates the encoded message by selecting cognate aminoacyl-transfer RNA (tRNA) molecules. The large subunit (LSU) contains the ribosomal catalytic site termed the peptidyl transferase center (PTC), which catalyzes the formation of peptide bonds, thereby polymerizing the amino acids delivered by tRNAs into a polypeptide chain. The nascent polypeptides leave the ribosome through a tunnel in the LSU and interact with protein factors that function in enzymatic processing, targeting, and the membrane insertion of nascent chains at the exit of the ribosomal tunnel (By similarity). uS2 is required for the assembly and/or stability of the 40S ribosomal subunit. Required for the processing of the 20S rRNA-precursor to mature 18S rRNA in a late step of the maturation of 40S ribosomal subunits (PubMed:14623272).</text>
</comment>
<comment type="subunit">
    <text evidence="2 4">Component of the small ribosomal subunit (SSU). Mature yeast ribosomes consist of a small (40S) and a large (60S) subunit. The 40S small subunit contains 1 molecule of ribosomal RNA (18S rRNA) and at least 33 different proteins. The large 60S subunit contains 3 rRNA molecules (25S, 5.8S and 5S rRNA) and at least 46 different proteins (By similarity). Interacts with eS21 (PubMed:14623272).</text>
</comment>
<comment type="subcellular location">
    <subcellularLocation>
        <location evidence="2 5">Cytoplasm</location>
    </subcellularLocation>
    <subcellularLocation>
        <location evidence="5">Nucleus</location>
    </subcellularLocation>
</comment>
<comment type="disruption phenotype">
    <text evidence="4">Deficiency of 40S ribosomal subunit formation, this is likely to be caused by insufficient 18S rRNA stability.</text>
</comment>
<comment type="miscellaneous">
    <text>There are 2 genes for uS2 in S.pombe.</text>
</comment>
<comment type="similarity">
    <text evidence="2">Belongs to the universal ribosomal protein uS2 family.</text>
</comment>
<feature type="chain" id="PRO_0000134368" description="Small ribosomal subunit protein uS2A">
    <location>
        <begin position="1"/>
        <end position="292"/>
    </location>
</feature>
<feature type="region of interest" description="Disordered" evidence="3">
    <location>
        <begin position="265"/>
        <end position="292"/>
    </location>
</feature>
<feature type="compositionally biased region" description="Polar residues" evidence="3">
    <location>
        <begin position="274"/>
        <end position="285"/>
    </location>
</feature>
<feature type="modified residue" description="Phosphoserine" evidence="6">
    <location>
        <position position="45"/>
    </location>
</feature>
<gene>
    <name type="primary">rps001</name>
    <name type="synonym">rps0a</name>
    <name type="synonym">rpsa1</name>
    <name type="ORF">SPBC685.06</name>
</gene>
<dbReference type="EMBL" id="CU329671">
    <property type="protein sequence ID" value="CAB39363.1"/>
    <property type="molecule type" value="Genomic_DNA"/>
</dbReference>
<dbReference type="PIR" id="T40637">
    <property type="entry name" value="T40637"/>
</dbReference>
<dbReference type="RefSeq" id="NP_596140.1">
    <property type="nucleotide sequence ID" value="NM_001022058.2"/>
</dbReference>
<dbReference type="PDB" id="9AXT">
    <property type="method" value="EM"/>
    <property type="resolution" value="2.40 A"/>
    <property type="chains" value="AD=1-292"/>
</dbReference>
<dbReference type="PDB" id="9AXV">
    <property type="method" value="EM"/>
    <property type="resolution" value="2.40 A"/>
    <property type="chains" value="AD=1-292"/>
</dbReference>
<dbReference type="PDBsum" id="9AXT"/>
<dbReference type="PDBsum" id="9AXV"/>
<dbReference type="EMDB" id="EMD-43972"/>
<dbReference type="EMDB" id="EMD-43976"/>
<dbReference type="SMR" id="Q9Y7L8"/>
<dbReference type="BioGRID" id="277659">
    <property type="interactions" value="39"/>
</dbReference>
<dbReference type="FunCoup" id="Q9Y7L8">
    <property type="interactions" value="436"/>
</dbReference>
<dbReference type="STRING" id="284812.Q9Y7L8"/>
<dbReference type="iPTMnet" id="Q9Y7L8"/>
<dbReference type="PaxDb" id="4896-SPBC685.06.1"/>
<dbReference type="EnsemblFungi" id="SPBC685.06.1">
    <property type="protein sequence ID" value="SPBC685.06.1:pep"/>
    <property type="gene ID" value="SPBC685.06"/>
</dbReference>
<dbReference type="GeneID" id="2541144"/>
<dbReference type="KEGG" id="spo:2541144"/>
<dbReference type="PomBase" id="SPBC685.06">
    <property type="gene designation" value="rps001"/>
</dbReference>
<dbReference type="VEuPathDB" id="FungiDB:SPBC685.06"/>
<dbReference type="eggNOG" id="KOG0830">
    <property type="taxonomic scope" value="Eukaryota"/>
</dbReference>
<dbReference type="HOGENOM" id="CLU_058171_1_0_1"/>
<dbReference type="InParanoid" id="Q9Y7L8"/>
<dbReference type="OMA" id="QMERYIC"/>
<dbReference type="PhylomeDB" id="Q9Y7L8"/>
<dbReference type="Reactome" id="R-SPO-156827">
    <property type="pathway name" value="L13a-mediated translational silencing of Ceruloplasmin expression"/>
</dbReference>
<dbReference type="Reactome" id="R-SPO-1799339">
    <property type="pathway name" value="SRP-dependent cotranslational protein targeting to membrane"/>
</dbReference>
<dbReference type="Reactome" id="R-SPO-72649">
    <property type="pathway name" value="Translation initiation complex formation"/>
</dbReference>
<dbReference type="Reactome" id="R-SPO-72689">
    <property type="pathway name" value="Formation of a pool of free 40S subunits"/>
</dbReference>
<dbReference type="Reactome" id="R-SPO-72695">
    <property type="pathway name" value="Formation of the ternary complex, and subsequently, the 43S complex"/>
</dbReference>
<dbReference type="Reactome" id="R-SPO-72702">
    <property type="pathway name" value="Ribosomal scanning and start codon recognition"/>
</dbReference>
<dbReference type="Reactome" id="R-SPO-72706">
    <property type="pathway name" value="GTP hydrolysis and joining of the 60S ribosomal subunit"/>
</dbReference>
<dbReference type="Reactome" id="R-SPO-975956">
    <property type="pathway name" value="Nonsense Mediated Decay (NMD) independent of the Exon Junction Complex (EJC)"/>
</dbReference>
<dbReference type="Reactome" id="R-SPO-975957">
    <property type="pathway name" value="Nonsense Mediated Decay (NMD) enhanced by the Exon Junction Complex (EJC)"/>
</dbReference>
<dbReference type="PRO" id="PR:Q9Y7L8"/>
<dbReference type="Proteomes" id="UP000002485">
    <property type="component" value="Chromosome II"/>
</dbReference>
<dbReference type="GO" id="GO:0005829">
    <property type="term" value="C:cytosol"/>
    <property type="evidence" value="ECO:0007005"/>
    <property type="project" value="PomBase"/>
</dbReference>
<dbReference type="GO" id="GO:0022627">
    <property type="term" value="C:cytosolic small ribosomal subunit"/>
    <property type="evidence" value="ECO:0000269"/>
    <property type="project" value="PomBase"/>
</dbReference>
<dbReference type="GO" id="GO:0005634">
    <property type="term" value="C:nucleus"/>
    <property type="evidence" value="ECO:0007005"/>
    <property type="project" value="PomBase"/>
</dbReference>
<dbReference type="GO" id="GO:0003735">
    <property type="term" value="F:structural constituent of ribosome"/>
    <property type="evidence" value="ECO:0000318"/>
    <property type="project" value="GO_Central"/>
</dbReference>
<dbReference type="GO" id="GO:0002181">
    <property type="term" value="P:cytoplasmic translation"/>
    <property type="evidence" value="ECO:0000318"/>
    <property type="project" value="GO_Central"/>
</dbReference>
<dbReference type="GO" id="GO:0000028">
    <property type="term" value="P:ribosomal small subunit assembly"/>
    <property type="evidence" value="ECO:0000318"/>
    <property type="project" value="GO_Central"/>
</dbReference>
<dbReference type="GO" id="GO:0042274">
    <property type="term" value="P:ribosomal small subunit biogenesis"/>
    <property type="evidence" value="ECO:0000315"/>
    <property type="project" value="PomBase"/>
</dbReference>
<dbReference type="GO" id="GO:0006364">
    <property type="term" value="P:rRNA processing"/>
    <property type="evidence" value="ECO:0007669"/>
    <property type="project" value="UniProtKB-KW"/>
</dbReference>
<dbReference type="CDD" id="cd01425">
    <property type="entry name" value="RPS2"/>
    <property type="match status" value="1"/>
</dbReference>
<dbReference type="FunFam" id="3.40.50.10490:FF:000010">
    <property type="entry name" value="40S ribosomal protein S0"/>
    <property type="match status" value="1"/>
</dbReference>
<dbReference type="Gene3D" id="3.40.50.10490">
    <property type="entry name" value="Glucose-6-phosphate isomerase like protein, domain 1"/>
    <property type="match status" value="1"/>
</dbReference>
<dbReference type="HAMAP" id="MF_03015">
    <property type="entry name" value="Ribosomal_S2_euk"/>
    <property type="match status" value="1"/>
</dbReference>
<dbReference type="InterPro" id="IPR001865">
    <property type="entry name" value="Ribosomal_uS2"/>
</dbReference>
<dbReference type="InterPro" id="IPR032281">
    <property type="entry name" value="Ribosomal_uS2_C"/>
</dbReference>
<dbReference type="InterPro" id="IPR018130">
    <property type="entry name" value="Ribosomal_uS2_CS"/>
</dbReference>
<dbReference type="InterPro" id="IPR027498">
    <property type="entry name" value="Ribosomal_uS2_euk"/>
</dbReference>
<dbReference type="InterPro" id="IPR005707">
    <property type="entry name" value="Ribosomal_uS2_euk/arc"/>
</dbReference>
<dbReference type="InterPro" id="IPR023591">
    <property type="entry name" value="Ribosomal_uS2_flav_dom_sf"/>
</dbReference>
<dbReference type="NCBIfam" id="TIGR01012">
    <property type="entry name" value="uS2_euk_arch"/>
    <property type="match status" value="1"/>
</dbReference>
<dbReference type="PANTHER" id="PTHR11489">
    <property type="entry name" value="40S RIBOSOMAL PROTEIN SA"/>
    <property type="match status" value="1"/>
</dbReference>
<dbReference type="Pfam" id="PF16122">
    <property type="entry name" value="40S_SA_C"/>
    <property type="match status" value="1"/>
</dbReference>
<dbReference type="Pfam" id="PF00318">
    <property type="entry name" value="Ribosomal_S2"/>
    <property type="match status" value="1"/>
</dbReference>
<dbReference type="PRINTS" id="PR00395">
    <property type="entry name" value="RIBOSOMALS2"/>
</dbReference>
<dbReference type="SUPFAM" id="SSF52313">
    <property type="entry name" value="Ribosomal protein S2"/>
    <property type="match status" value="1"/>
</dbReference>
<dbReference type="PROSITE" id="PS00963">
    <property type="entry name" value="RIBOSOMAL_S2_2"/>
    <property type="match status" value="1"/>
</dbReference>
<evidence type="ECO:0000250" key="1">
    <source>
        <dbReference type="UniProtKB" id="P32905"/>
    </source>
</evidence>
<evidence type="ECO:0000255" key="2">
    <source>
        <dbReference type="HAMAP-Rule" id="MF_03015"/>
    </source>
</evidence>
<evidence type="ECO:0000256" key="3">
    <source>
        <dbReference type="SAM" id="MobiDB-lite"/>
    </source>
</evidence>
<evidence type="ECO:0000269" key="4">
    <source>
    </source>
</evidence>
<evidence type="ECO:0000269" key="5">
    <source>
    </source>
</evidence>
<evidence type="ECO:0000269" key="6">
    <source>
    </source>
</evidence>
<evidence type="ECO:0000305" key="7"/>
<sequence>MAQVGRPNILNATDEDIKQLLAANCHIGSKNLEVRMDNYVWKRRSDGVHILNLGKTWEKLVLAARVIATIENPADVCVVSTRTYGHRAVLKFAAHTGATAIAGRFTPGNFTNYITRTYREPRLIVVTDPRADAQAIKEASFVNIPVIALCDTDSILNHVDIAIPTNNKGRKSIGLIWYLLAREVLRVRGTLSRSAPWDVMPDLYFYRDPEEVEREEEAKKAAAAAAEEAQVEEAVAAAEFEITDSAAGSVDPNVLAAATAGQVGENTWEGAGDWNTTGAAQTSDWTAAAEAQ</sequence>
<protein>
    <recommendedName>
        <fullName evidence="2 7">Small ribosomal subunit protein uS2A</fullName>
    </recommendedName>
    <alternativeName>
        <fullName evidence="2">40S ribosomal protein S0-A</fullName>
    </alternativeName>
</protein>
<proteinExistence type="evidence at protein level"/>